<feature type="chain" id="PRO_0000049510" description="Uncharacterized protein YdjB">
    <location>
        <begin position="1"/>
        <end position="111"/>
    </location>
</feature>
<keyword id="KW-1185">Reference proteome</keyword>
<gene>
    <name type="primary">ydjB</name>
    <name type="ordered locus">BSU06120</name>
</gene>
<sequence>MLNIKSDRIMTSDPQKFTVDGVRFFQQYLNKIRPDAMEIDNLIINSDIIKEDLIVHVSKMIDRLALYDLHRKRSIDKHFSAAFTVDINDREEFYSANIADVSIDLNESSGV</sequence>
<comment type="disruption phenotype">
    <text evidence="1">No BsuMI restriction or methylation-related phenotype.</text>
</comment>
<reference key="1">
    <citation type="journal article" date="1997" name="DNA Res.">
        <title>Sequence analysis of the groESL-cotA region of the Bacillus subtilis genome, containing the restriction/modification system genes.</title>
        <authorList>
            <person name="Kasahara Y."/>
            <person name="Nakai S."/>
            <person name="Ogasawara N."/>
            <person name="Yata K."/>
            <person name="Sadaie Y."/>
        </authorList>
    </citation>
    <scope>NUCLEOTIDE SEQUENCE [GENOMIC DNA]</scope>
    <source>
        <strain>168 / Marburg / ATCC 6051 / DSM 10 / JCM 1465 / NBRC 13719 / NCIMB 3610 / NRRL NRS-744 / VKM B-501</strain>
    </source>
</reference>
<reference key="2">
    <citation type="journal article" date="1997" name="Nature">
        <title>The complete genome sequence of the Gram-positive bacterium Bacillus subtilis.</title>
        <authorList>
            <person name="Kunst F."/>
            <person name="Ogasawara N."/>
            <person name="Moszer I."/>
            <person name="Albertini A.M."/>
            <person name="Alloni G."/>
            <person name="Azevedo V."/>
            <person name="Bertero M.G."/>
            <person name="Bessieres P."/>
            <person name="Bolotin A."/>
            <person name="Borchert S."/>
            <person name="Borriss R."/>
            <person name="Boursier L."/>
            <person name="Brans A."/>
            <person name="Braun M."/>
            <person name="Brignell S.C."/>
            <person name="Bron S."/>
            <person name="Brouillet S."/>
            <person name="Bruschi C.V."/>
            <person name="Caldwell B."/>
            <person name="Capuano V."/>
            <person name="Carter N.M."/>
            <person name="Choi S.-K."/>
            <person name="Codani J.-J."/>
            <person name="Connerton I.F."/>
            <person name="Cummings N.J."/>
            <person name="Daniel R.A."/>
            <person name="Denizot F."/>
            <person name="Devine K.M."/>
            <person name="Duesterhoeft A."/>
            <person name="Ehrlich S.D."/>
            <person name="Emmerson P.T."/>
            <person name="Entian K.-D."/>
            <person name="Errington J."/>
            <person name="Fabret C."/>
            <person name="Ferrari E."/>
            <person name="Foulger D."/>
            <person name="Fritz C."/>
            <person name="Fujita M."/>
            <person name="Fujita Y."/>
            <person name="Fuma S."/>
            <person name="Galizzi A."/>
            <person name="Galleron N."/>
            <person name="Ghim S.-Y."/>
            <person name="Glaser P."/>
            <person name="Goffeau A."/>
            <person name="Golightly E.J."/>
            <person name="Grandi G."/>
            <person name="Guiseppi G."/>
            <person name="Guy B.J."/>
            <person name="Haga K."/>
            <person name="Haiech J."/>
            <person name="Harwood C.R."/>
            <person name="Henaut A."/>
            <person name="Hilbert H."/>
            <person name="Holsappel S."/>
            <person name="Hosono S."/>
            <person name="Hullo M.-F."/>
            <person name="Itaya M."/>
            <person name="Jones L.-M."/>
            <person name="Joris B."/>
            <person name="Karamata D."/>
            <person name="Kasahara Y."/>
            <person name="Klaerr-Blanchard M."/>
            <person name="Klein C."/>
            <person name="Kobayashi Y."/>
            <person name="Koetter P."/>
            <person name="Koningstein G."/>
            <person name="Krogh S."/>
            <person name="Kumano M."/>
            <person name="Kurita K."/>
            <person name="Lapidus A."/>
            <person name="Lardinois S."/>
            <person name="Lauber J."/>
            <person name="Lazarevic V."/>
            <person name="Lee S.-M."/>
            <person name="Levine A."/>
            <person name="Liu H."/>
            <person name="Masuda S."/>
            <person name="Mauel C."/>
            <person name="Medigue C."/>
            <person name="Medina N."/>
            <person name="Mellado R.P."/>
            <person name="Mizuno M."/>
            <person name="Moestl D."/>
            <person name="Nakai S."/>
            <person name="Noback M."/>
            <person name="Noone D."/>
            <person name="O'Reilly M."/>
            <person name="Ogawa K."/>
            <person name="Ogiwara A."/>
            <person name="Oudega B."/>
            <person name="Park S.-H."/>
            <person name="Parro V."/>
            <person name="Pohl T.M."/>
            <person name="Portetelle D."/>
            <person name="Porwollik S."/>
            <person name="Prescott A.M."/>
            <person name="Presecan E."/>
            <person name="Pujic P."/>
            <person name="Purnelle B."/>
            <person name="Rapoport G."/>
            <person name="Rey M."/>
            <person name="Reynolds S."/>
            <person name="Rieger M."/>
            <person name="Rivolta C."/>
            <person name="Rocha E."/>
            <person name="Roche B."/>
            <person name="Rose M."/>
            <person name="Sadaie Y."/>
            <person name="Sato T."/>
            <person name="Scanlan E."/>
            <person name="Schleich S."/>
            <person name="Schroeter R."/>
            <person name="Scoffone F."/>
            <person name="Sekiguchi J."/>
            <person name="Sekowska A."/>
            <person name="Seror S.J."/>
            <person name="Serror P."/>
            <person name="Shin B.-S."/>
            <person name="Soldo B."/>
            <person name="Sorokin A."/>
            <person name="Tacconi E."/>
            <person name="Takagi T."/>
            <person name="Takahashi H."/>
            <person name="Takemaru K."/>
            <person name="Takeuchi M."/>
            <person name="Tamakoshi A."/>
            <person name="Tanaka T."/>
            <person name="Terpstra P."/>
            <person name="Tognoni A."/>
            <person name="Tosato V."/>
            <person name="Uchiyama S."/>
            <person name="Vandenbol M."/>
            <person name="Vannier F."/>
            <person name="Vassarotti A."/>
            <person name="Viari A."/>
            <person name="Wambutt R."/>
            <person name="Wedler E."/>
            <person name="Wedler H."/>
            <person name="Weitzenegger T."/>
            <person name="Winters P."/>
            <person name="Wipat A."/>
            <person name="Yamamoto H."/>
            <person name="Yamane K."/>
            <person name="Yasumoto K."/>
            <person name="Yata K."/>
            <person name="Yoshida K."/>
            <person name="Yoshikawa H.-F."/>
            <person name="Zumstein E."/>
            <person name="Yoshikawa H."/>
            <person name="Danchin A."/>
        </authorList>
    </citation>
    <scope>NUCLEOTIDE SEQUENCE [LARGE SCALE GENOMIC DNA]</scope>
    <source>
        <strain>168</strain>
    </source>
</reference>
<reference key="3">
    <citation type="journal article" date="2002" name="J. Bacteriol.">
        <title>Molecular organization of intrinsic restriction and modification genes BsuM of Bacillus subtilis Marburg.</title>
        <authorList>
            <person name="Ohshima H."/>
            <person name="Matsuoka S."/>
            <person name="Asai K."/>
            <person name="Sadaie Y."/>
        </authorList>
    </citation>
    <scope>DISRUPTION PHENOTYPE</scope>
    <source>
        <strain>168 / Marburg / ATCC 6051 / DSM 10 / JCM 1465 / NBRC 13719 / NCIMB 3610 / NRRL NRS-744 / VKM B-501</strain>
    </source>
</reference>
<name>YDJB_BACSU</name>
<organism>
    <name type="scientific">Bacillus subtilis (strain 168)</name>
    <dbReference type="NCBI Taxonomy" id="224308"/>
    <lineage>
        <taxon>Bacteria</taxon>
        <taxon>Bacillati</taxon>
        <taxon>Bacillota</taxon>
        <taxon>Bacilli</taxon>
        <taxon>Bacillales</taxon>
        <taxon>Bacillaceae</taxon>
        <taxon>Bacillus</taxon>
    </lineage>
</organism>
<dbReference type="EMBL" id="AB007637">
    <property type="protein sequence ID" value="BAA22756.1"/>
    <property type="molecule type" value="Genomic_DNA"/>
</dbReference>
<dbReference type="EMBL" id="AL009126">
    <property type="protein sequence ID" value="CAB12431.1"/>
    <property type="molecule type" value="Genomic_DNA"/>
</dbReference>
<dbReference type="PIR" id="F69788">
    <property type="entry name" value="F69788"/>
</dbReference>
<dbReference type="RefSeq" id="NP_388493.1">
    <property type="nucleotide sequence ID" value="NC_000964.3"/>
</dbReference>
<dbReference type="RefSeq" id="WP_010886428.1">
    <property type="nucleotide sequence ID" value="NZ_OZ025638.1"/>
</dbReference>
<dbReference type="SMR" id="O34778"/>
<dbReference type="FunCoup" id="O34778">
    <property type="interactions" value="314"/>
</dbReference>
<dbReference type="PaxDb" id="224308-BSU06120"/>
<dbReference type="EnsemblBacteria" id="CAB12431">
    <property type="protein sequence ID" value="CAB12431"/>
    <property type="gene ID" value="BSU_06120"/>
</dbReference>
<dbReference type="GeneID" id="935917"/>
<dbReference type="KEGG" id="bsu:BSU06120"/>
<dbReference type="PATRIC" id="fig|224308.179.peg.663"/>
<dbReference type="InParanoid" id="O34778"/>
<dbReference type="OrthoDB" id="2939773at2"/>
<dbReference type="BioCyc" id="BSUB:BSU06120-MONOMER"/>
<dbReference type="Proteomes" id="UP000001570">
    <property type="component" value="Chromosome"/>
</dbReference>
<protein>
    <recommendedName>
        <fullName>Uncharacterized protein YdjB</fullName>
    </recommendedName>
</protein>
<proteinExistence type="predicted"/>
<accession>O34778</accession>
<evidence type="ECO:0000269" key="1">
    <source>
    </source>
</evidence>